<comment type="function">
    <text evidence="4 5">Transcriptional repressor involved in the inhibition of plant growth under abiotic stress conditions. Can repress the expression of various genes, including osmotic stress and abscisic acid-repressive genes and auxin-inducible genes, by binding to their promoter regions in a DNA sequence-specific manner.</text>
</comment>
<comment type="subcellular location">
    <subcellularLocation>
        <location evidence="4 5">Nucleus</location>
    </subcellularLocation>
</comment>
<comment type="tissue specificity">
    <text evidence="3 4">Highly expressed in roots and at lower levels in leaves and stems.</text>
</comment>
<comment type="induction">
    <text evidence="3 4 5">By abscisic acid (ABA), ethylene, dehydration, salt and cold.</text>
</comment>
<comment type="miscellaneous">
    <text evidence="6">Plants overexpressing AZF1 have increased sensitivity to salt stress and barely survive under high salt conditions.</text>
</comment>
<reference key="1">
    <citation type="journal article" date="2000" name="Gene">
        <title>Expression of a subset of the Arabidopsis Cys(2)/His(2)-type zinc-finger protein gene family under water stress.</title>
        <authorList>
            <person name="Sakamoto H."/>
            <person name="Araki T."/>
            <person name="Meshi T."/>
            <person name="Iwabuchi M."/>
        </authorList>
    </citation>
    <scope>NUCLEOTIDE SEQUENCE [GENOMIC DNA]</scope>
    <scope>TISSUE SPECIFICITY</scope>
    <scope>INDUCTION</scope>
    <source>
        <strain>cv. Columbia</strain>
    </source>
</reference>
<reference key="2">
    <citation type="submission" date="2002-06" db="EMBL/GenBank/DDBJ databases">
        <title>Zinc finger protein OZAKGYO.</title>
        <authorList>
            <person name="Kim S."/>
            <person name="Choi Y."/>
            <person name="Jeong C.-W."/>
            <person name="Choi E.K."/>
            <person name="Chang M.-S."/>
            <person name="Lee I."/>
            <person name="Fischer R.L."/>
            <person name="Choi Y.D."/>
            <person name="Lee J.S."/>
        </authorList>
    </citation>
    <scope>NUCLEOTIDE SEQUENCE [GENOMIC DNA]</scope>
</reference>
<reference key="3">
    <citation type="journal article" date="1997" name="DNA Res.">
        <title>Structural analysis of Arabidopsis thaliana chromosome 5. III. Sequence features of the regions of 1,191,918 bp covered by seventeen physically assigned P1 clones.</title>
        <authorList>
            <person name="Nakamura Y."/>
            <person name="Sato S."/>
            <person name="Kaneko T."/>
            <person name="Kotani H."/>
            <person name="Asamizu E."/>
            <person name="Miyajima N."/>
            <person name="Tabata S."/>
        </authorList>
    </citation>
    <scope>NUCLEOTIDE SEQUENCE [LARGE SCALE GENOMIC DNA]</scope>
    <source>
        <strain>cv. Columbia</strain>
    </source>
</reference>
<reference key="4">
    <citation type="journal article" date="2017" name="Plant J.">
        <title>Araport11: a complete reannotation of the Arabidopsis thaliana reference genome.</title>
        <authorList>
            <person name="Cheng C.Y."/>
            <person name="Krishnakumar V."/>
            <person name="Chan A.P."/>
            <person name="Thibaud-Nissen F."/>
            <person name="Schobel S."/>
            <person name="Town C.D."/>
        </authorList>
    </citation>
    <scope>GENOME REANNOTATION</scope>
    <source>
        <strain>cv. Columbia</strain>
    </source>
</reference>
<reference key="5">
    <citation type="journal article" date="2003" name="Science">
        <title>Empirical analysis of transcriptional activity in the Arabidopsis genome.</title>
        <authorList>
            <person name="Yamada K."/>
            <person name="Lim J."/>
            <person name="Dale J.M."/>
            <person name="Chen H."/>
            <person name="Shinn P."/>
            <person name="Palm C.J."/>
            <person name="Southwick A.M."/>
            <person name="Wu H.C."/>
            <person name="Kim C.J."/>
            <person name="Nguyen M."/>
            <person name="Pham P.K."/>
            <person name="Cheuk R.F."/>
            <person name="Karlin-Newmann G."/>
            <person name="Liu S.X."/>
            <person name="Lam B."/>
            <person name="Sakano H."/>
            <person name="Wu T."/>
            <person name="Yu G."/>
            <person name="Miranda M."/>
            <person name="Quach H.L."/>
            <person name="Tripp M."/>
            <person name="Chang C.H."/>
            <person name="Lee J.M."/>
            <person name="Toriumi M.J."/>
            <person name="Chan M.M."/>
            <person name="Tang C.C."/>
            <person name="Onodera C.S."/>
            <person name="Deng J.M."/>
            <person name="Akiyama K."/>
            <person name="Ansari Y."/>
            <person name="Arakawa T."/>
            <person name="Banh J."/>
            <person name="Banno F."/>
            <person name="Bowser L."/>
            <person name="Brooks S.Y."/>
            <person name="Carninci P."/>
            <person name="Chao Q."/>
            <person name="Choy N."/>
            <person name="Enju A."/>
            <person name="Goldsmith A.D."/>
            <person name="Gurjal M."/>
            <person name="Hansen N.F."/>
            <person name="Hayashizaki Y."/>
            <person name="Johnson-Hopson C."/>
            <person name="Hsuan V.W."/>
            <person name="Iida K."/>
            <person name="Karnes M."/>
            <person name="Khan S."/>
            <person name="Koesema E."/>
            <person name="Ishida J."/>
            <person name="Jiang P.X."/>
            <person name="Jones T."/>
            <person name="Kawai J."/>
            <person name="Kamiya A."/>
            <person name="Meyers C."/>
            <person name="Nakajima M."/>
            <person name="Narusaka M."/>
            <person name="Seki M."/>
            <person name="Sakurai T."/>
            <person name="Satou M."/>
            <person name="Tamse R."/>
            <person name="Vaysberg M."/>
            <person name="Wallender E.K."/>
            <person name="Wong C."/>
            <person name="Yamamura Y."/>
            <person name="Yuan S."/>
            <person name="Shinozaki K."/>
            <person name="Davis R.W."/>
            <person name="Theologis A."/>
            <person name="Ecker J.R."/>
        </authorList>
    </citation>
    <scope>NUCLEOTIDE SEQUENCE [LARGE SCALE MRNA]</scope>
    <source>
        <strain>cv. Columbia</strain>
    </source>
</reference>
<reference key="6">
    <citation type="submission" date="2006-07" db="EMBL/GenBank/DDBJ databases">
        <title>Large-scale analysis of RIKEN Arabidopsis full-length (RAFL) cDNAs.</title>
        <authorList>
            <person name="Totoki Y."/>
            <person name="Seki M."/>
            <person name="Ishida J."/>
            <person name="Nakajima M."/>
            <person name="Enju A."/>
            <person name="Kamiya A."/>
            <person name="Narusaka M."/>
            <person name="Shin-i T."/>
            <person name="Nakagawa M."/>
            <person name="Sakamoto N."/>
            <person name="Oishi K."/>
            <person name="Kohara Y."/>
            <person name="Kobayashi M."/>
            <person name="Toyoda A."/>
            <person name="Sakaki Y."/>
            <person name="Sakurai T."/>
            <person name="Iida K."/>
            <person name="Akiyama K."/>
            <person name="Satou M."/>
            <person name="Toyoda T."/>
            <person name="Konagaya A."/>
            <person name="Carninci P."/>
            <person name="Kawai J."/>
            <person name="Hayashizaki Y."/>
            <person name="Shinozaki K."/>
        </authorList>
    </citation>
    <scope>NUCLEOTIDE SEQUENCE [LARGE SCALE MRNA]</scope>
    <source>
        <strain>cv. Columbia</strain>
    </source>
</reference>
<reference key="7">
    <citation type="journal article" date="2004" name="Plant Physiol.">
        <title>Arabidopsis Cys2/His2-type zinc-finger proteins function as transcription repressors under drought, cold, and high-salinity stress conditions.</title>
        <authorList>
            <person name="Sakamoto H."/>
            <person name="Maruyama K."/>
            <person name="Sakuma Y."/>
            <person name="Meshi T."/>
            <person name="Iwabuchi M."/>
            <person name="Shinozaki K."/>
            <person name="Yamaguchi-Shinozaki K."/>
        </authorList>
    </citation>
    <scope>FUNCTION</scope>
    <scope>SUBCELLULAR LOCATION</scope>
    <scope>TISSUE SPECIFICITY</scope>
    <scope>INDUCTION</scope>
</reference>
<reference key="8">
    <citation type="journal article" date="2011" name="Plant Physiol.">
        <title>Arabidopsis Cys2/His2 zinc-finger proteins AZF1 and AZF2 negatively regulate abscisic acid-repressive and auxin-inducible genes under abiotic stress conditions.</title>
        <authorList>
            <person name="Kodaira K.S."/>
            <person name="Qin F."/>
            <person name="Tran L.S."/>
            <person name="Maruyama K."/>
            <person name="Kidokoro S."/>
            <person name="Fujita Y."/>
            <person name="Shinozaki K."/>
            <person name="Yamaguchi-Shinozaki K."/>
        </authorList>
    </citation>
    <scope>FUNCTION</scope>
    <scope>SUBCELLULAR LOCATION</scope>
    <scope>INDUCTION</scope>
</reference>
<organism>
    <name type="scientific">Arabidopsis thaliana</name>
    <name type="common">Mouse-ear cress</name>
    <dbReference type="NCBI Taxonomy" id="3702"/>
    <lineage>
        <taxon>Eukaryota</taxon>
        <taxon>Viridiplantae</taxon>
        <taxon>Streptophyta</taxon>
        <taxon>Embryophyta</taxon>
        <taxon>Tracheophyta</taxon>
        <taxon>Spermatophyta</taxon>
        <taxon>Magnoliopsida</taxon>
        <taxon>eudicotyledons</taxon>
        <taxon>Gunneridae</taxon>
        <taxon>Pentapetalae</taxon>
        <taxon>rosids</taxon>
        <taxon>malvids</taxon>
        <taxon>Brassicales</taxon>
        <taxon>Brassicaceae</taxon>
        <taxon>Camelineae</taxon>
        <taxon>Arabidopsis</taxon>
    </lineage>
</organism>
<dbReference type="EMBL" id="AB030731">
    <property type="protein sequence ID" value="BAA85108.1"/>
    <property type="molecule type" value="Genomic_DNA"/>
</dbReference>
<dbReference type="EMBL" id="AY123328">
    <property type="protein sequence ID" value="AAM78034.1"/>
    <property type="molecule type" value="Genomic_DNA"/>
</dbReference>
<dbReference type="EMBL" id="AB007645">
    <property type="protein sequence ID" value="BAB09030.1"/>
    <property type="molecule type" value="Genomic_DNA"/>
</dbReference>
<dbReference type="EMBL" id="CP002688">
    <property type="protein sequence ID" value="AED98346.1"/>
    <property type="molecule type" value="Genomic_DNA"/>
</dbReference>
<dbReference type="EMBL" id="BT003064">
    <property type="protein sequence ID" value="AAO23629.1"/>
    <property type="molecule type" value="mRNA"/>
</dbReference>
<dbReference type="EMBL" id="AK227608">
    <property type="protein sequence ID" value="BAE99599.1"/>
    <property type="molecule type" value="mRNA"/>
</dbReference>
<dbReference type="RefSeq" id="NP_201546.1">
    <property type="nucleotide sequence ID" value="NM_126145.3"/>
</dbReference>
<dbReference type="BioGRID" id="22123">
    <property type="interactions" value="1"/>
</dbReference>
<dbReference type="IntAct" id="Q9SSW1">
    <property type="interactions" value="1"/>
</dbReference>
<dbReference type="STRING" id="3702.Q9SSW1"/>
<dbReference type="PaxDb" id="3702-AT5G67450.1"/>
<dbReference type="EnsemblPlants" id="AT5G67450.1">
    <property type="protein sequence ID" value="AT5G67450.1"/>
    <property type="gene ID" value="AT5G67450"/>
</dbReference>
<dbReference type="GeneID" id="836881"/>
<dbReference type="Gramene" id="AT5G67450.1">
    <property type="protein sequence ID" value="AT5G67450.1"/>
    <property type="gene ID" value="AT5G67450"/>
</dbReference>
<dbReference type="KEGG" id="ath:AT5G67450"/>
<dbReference type="Araport" id="AT5G67450"/>
<dbReference type="TAIR" id="AT5G67450">
    <property type="gene designation" value="ZF1"/>
</dbReference>
<dbReference type="eggNOG" id="KOG1721">
    <property type="taxonomic scope" value="Eukaryota"/>
</dbReference>
<dbReference type="HOGENOM" id="CLU_059471_1_2_1"/>
<dbReference type="InParanoid" id="Q9SSW1"/>
<dbReference type="OMA" id="PEQHQRD"/>
<dbReference type="OrthoDB" id="40579at2759"/>
<dbReference type="PhylomeDB" id="Q9SSW1"/>
<dbReference type="PRO" id="PR:Q9SSW1"/>
<dbReference type="Proteomes" id="UP000006548">
    <property type="component" value="Chromosome 5"/>
</dbReference>
<dbReference type="ExpressionAtlas" id="Q9SSW1">
    <property type="expression patterns" value="baseline and differential"/>
</dbReference>
<dbReference type="GO" id="GO:0005634">
    <property type="term" value="C:nucleus"/>
    <property type="evidence" value="ECO:0000314"/>
    <property type="project" value="TAIR"/>
</dbReference>
<dbReference type="GO" id="GO:0003677">
    <property type="term" value="F:DNA binding"/>
    <property type="evidence" value="ECO:0000250"/>
    <property type="project" value="TAIR"/>
</dbReference>
<dbReference type="GO" id="GO:0003700">
    <property type="term" value="F:DNA-binding transcription factor activity"/>
    <property type="evidence" value="ECO:0000250"/>
    <property type="project" value="TAIR"/>
</dbReference>
<dbReference type="GO" id="GO:0043565">
    <property type="term" value="F:sequence-specific DNA binding"/>
    <property type="evidence" value="ECO:0000314"/>
    <property type="project" value="TAIR"/>
</dbReference>
<dbReference type="GO" id="GO:0008270">
    <property type="term" value="F:zinc ion binding"/>
    <property type="evidence" value="ECO:0007669"/>
    <property type="project" value="UniProtKB-KW"/>
</dbReference>
<dbReference type="GO" id="GO:0009738">
    <property type="term" value="P:abscisic acid-activated signaling pathway"/>
    <property type="evidence" value="ECO:0007669"/>
    <property type="project" value="UniProtKB-KW"/>
</dbReference>
<dbReference type="GO" id="GO:0042538">
    <property type="term" value="P:hyperosmotic salinity response"/>
    <property type="evidence" value="ECO:0000270"/>
    <property type="project" value="TAIR"/>
</dbReference>
<dbReference type="GO" id="GO:0045892">
    <property type="term" value="P:negative regulation of DNA-templated transcription"/>
    <property type="evidence" value="ECO:0000314"/>
    <property type="project" value="TAIR"/>
</dbReference>
<dbReference type="GO" id="GO:0009409">
    <property type="term" value="P:response to cold"/>
    <property type="evidence" value="ECO:0000270"/>
    <property type="project" value="TAIR"/>
</dbReference>
<dbReference type="Gene3D" id="3.30.160.60">
    <property type="entry name" value="Classic Zinc Finger"/>
    <property type="match status" value="1"/>
</dbReference>
<dbReference type="InterPro" id="IPR044653">
    <property type="entry name" value="AZF1/2/3-like"/>
</dbReference>
<dbReference type="InterPro" id="IPR036236">
    <property type="entry name" value="Znf_C2H2_sf"/>
</dbReference>
<dbReference type="InterPro" id="IPR013087">
    <property type="entry name" value="Znf_C2H2_type"/>
</dbReference>
<dbReference type="PANTHER" id="PTHR45988">
    <property type="entry name" value="C2H2 TYPE ZINC FINGER TRANSCRIPTION FACTOR FAMILY-RELATED"/>
    <property type="match status" value="1"/>
</dbReference>
<dbReference type="PANTHER" id="PTHR45988:SF42">
    <property type="entry name" value="ZINC FINGER PROTEIN AZF1"/>
    <property type="match status" value="1"/>
</dbReference>
<dbReference type="Pfam" id="PF13912">
    <property type="entry name" value="zf-C2H2_6"/>
    <property type="match status" value="2"/>
</dbReference>
<dbReference type="SMART" id="SM00355">
    <property type="entry name" value="ZnF_C2H2"/>
    <property type="match status" value="2"/>
</dbReference>
<dbReference type="SUPFAM" id="SSF57667">
    <property type="entry name" value="beta-beta-alpha zinc fingers"/>
    <property type="match status" value="1"/>
</dbReference>
<dbReference type="PROSITE" id="PS00028">
    <property type="entry name" value="ZINC_FINGER_C2H2_1"/>
    <property type="match status" value="2"/>
</dbReference>
<dbReference type="PROSITE" id="PS50157">
    <property type="entry name" value="ZINC_FINGER_C2H2_2"/>
    <property type="match status" value="2"/>
</dbReference>
<protein>
    <recommendedName>
        <fullName>Zinc finger protein AZF1</fullName>
    </recommendedName>
    <alternativeName>
        <fullName>Zinc finger protein OZAKGYO</fullName>
    </alternativeName>
    <alternativeName>
        <fullName>Zinc-finger protein 1</fullName>
    </alternativeName>
</protein>
<accession>Q9SSW1</accession>
<keyword id="KW-0938">Abscisic acid signaling pathway</keyword>
<keyword id="KW-0238">DNA-binding</keyword>
<keyword id="KW-0479">Metal-binding</keyword>
<keyword id="KW-0539">Nucleus</keyword>
<keyword id="KW-1185">Reference proteome</keyword>
<keyword id="KW-0677">Repeat</keyword>
<keyword id="KW-0678">Repressor</keyword>
<keyword id="KW-0804">Transcription</keyword>
<keyword id="KW-0805">Transcription regulation</keyword>
<keyword id="KW-0862">Zinc</keyword>
<keyword id="KW-0863">Zinc-finger</keyword>
<name>AZF1_ARATH</name>
<gene>
    <name type="primary">AZF1</name>
    <name type="synonym">ZF1</name>
    <name type="ordered locus">At5g67450</name>
    <name type="ORF">K8K14.19</name>
</gene>
<proteinExistence type="evidence at transcript level"/>
<feature type="chain" id="PRO_0000421826" description="Zinc finger protein AZF1">
    <location>
        <begin position="1"/>
        <end position="245"/>
    </location>
</feature>
<feature type="zinc finger region" description="C2H2-type 1" evidence="1">
    <location>
        <begin position="97"/>
        <end position="119"/>
    </location>
</feature>
<feature type="zinc finger region" description="C2H2-type 2" evidence="1">
    <location>
        <begin position="164"/>
        <end position="186"/>
    </location>
</feature>
<feature type="region of interest" description="Disordered" evidence="2">
    <location>
        <begin position="1"/>
        <end position="57"/>
    </location>
</feature>
<feature type="region of interest" description="Disordered" evidence="2">
    <location>
        <begin position="112"/>
        <end position="141"/>
    </location>
</feature>
<feature type="region of interest" description="Disordered" evidence="2">
    <location>
        <begin position="193"/>
        <end position="231"/>
    </location>
</feature>
<feature type="compositionally biased region" description="Polar residues" evidence="2">
    <location>
        <begin position="1"/>
        <end position="15"/>
    </location>
</feature>
<feature type="compositionally biased region" description="Polar residues" evidence="2">
    <location>
        <begin position="123"/>
        <end position="134"/>
    </location>
</feature>
<evidence type="ECO:0000255" key="1">
    <source>
        <dbReference type="PROSITE-ProRule" id="PRU00042"/>
    </source>
</evidence>
<evidence type="ECO:0000256" key="2">
    <source>
        <dbReference type="SAM" id="MobiDB-lite"/>
    </source>
</evidence>
<evidence type="ECO:0000269" key="3">
    <source>
    </source>
</evidence>
<evidence type="ECO:0000269" key="4">
    <source>
    </source>
</evidence>
<evidence type="ECO:0000269" key="5">
    <source>
    </source>
</evidence>
<evidence type="ECO:0000305" key="6">
    <source>
    </source>
</evidence>
<sequence length="245" mass="26471">MALETLNSPTATTTARPLLRYREEMEPENLEQWAKRKRTKRQRFDHGHQNQETNKNLPSEEEYLALCLLMLARGSAVQSPPLPPLPSRASPSDHRDYKCTVCGKSFSSYQALGGHKTSHRKPTNTSITSGNQELSNNSHSNSGSVVINVTVNTGNGVSQSGKIHTCSICFKSFASGQALGGHKRCHYDGGNNGNGNGSSSNSVELVAGSDVSDVDNERWSEESAIGGHRGFDLNLPADQVSVTTS</sequence>